<gene>
    <name evidence="1" type="primary">nadK</name>
    <name type="ordered locus">PBPRA0695</name>
</gene>
<feature type="chain" id="PRO_0000229664" description="NAD kinase">
    <location>
        <begin position="1"/>
        <end position="293"/>
    </location>
</feature>
<feature type="active site" description="Proton acceptor" evidence="1">
    <location>
        <position position="73"/>
    </location>
</feature>
<feature type="binding site" evidence="1">
    <location>
        <begin position="73"/>
        <end position="74"/>
    </location>
    <ligand>
        <name>NAD(+)</name>
        <dbReference type="ChEBI" id="CHEBI:57540"/>
    </ligand>
</feature>
<feature type="binding site" evidence="1">
    <location>
        <begin position="147"/>
        <end position="148"/>
    </location>
    <ligand>
        <name>NAD(+)</name>
        <dbReference type="ChEBI" id="CHEBI:57540"/>
    </ligand>
</feature>
<feature type="binding site" evidence="1">
    <location>
        <position position="158"/>
    </location>
    <ligand>
        <name>NAD(+)</name>
        <dbReference type="ChEBI" id="CHEBI:57540"/>
    </ligand>
</feature>
<feature type="binding site" evidence="1">
    <location>
        <position position="175"/>
    </location>
    <ligand>
        <name>NAD(+)</name>
        <dbReference type="ChEBI" id="CHEBI:57540"/>
    </ligand>
</feature>
<feature type="binding site" evidence="1">
    <location>
        <position position="177"/>
    </location>
    <ligand>
        <name>NAD(+)</name>
        <dbReference type="ChEBI" id="CHEBI:57540"/>
    </ligand>
</feature>
<feature type="binding site" evidence="1">
    <location>
        <begin position="188"/>
        <end position="193"/>
    </location>
    <ligand>
        <name>NAD(+)</name>
        <dbReference type="ChEBI" id="CHEBI:57540"/>
    </ligand>
</feature>
<feature type="binding site" evidence="1">
    <location>
        <position position="248"/>
    </location>
    <ligand>
        <name>NAD(+)</name>
        <dbReference type="ChEBI" id="CHEBI:57540"/>
    </ligand>
</feature>
<comment type="function">
    <text evidence="1">Involved in the regulation of the intracellular balance of NAD and NADP, and is a key enzyme in the biosynthesis of NADP. Catalyzes specifically the phosphorylation on 2'-hydroxyl of the adenosine moiety of NAD to yield NADP.</text>
</comment>
<comment type="catalytic activity">
    <reaction evidence="1">
        <text>NAD(+) + ATP = ADP + NADP(+) + H(+)</text>
        <dbReference type="Rhea" id="RHEA:18629"/>
        <dbReference type="ChEBI" id="CHEBI:15378"/>
        <dbReference type="ChEBI" id="CHEBI:30616"/>
        <dbReference type="ChEBI" id="CHEBI:57540"/>
        <dbReference type="ChEBI" id="CHEBI:58349"/>
        <dbReference type="ChEBI" id="CHEBI:456216"/>
        <dbReference type="EC" id="2.7.1.23"/>
    </reaction>
</comment>
<comment type="cofactor">
    <cofactor evidence="1">
        <name>a divalent metal cation</name>
        <dbReference type="ChEBI" id="CHEBI:60240"/>
    </cofactor>
</comment>
<comment type="subcellular location">
    <subcellularLocation>
        <location evidence="1">Cytoplasm</location>
    </subcellularLocation>
</comment>
<comment type="similarity">
    <text evidence="1">Belongs to the NAD kinase family.</text>
</comment>
<protein>
    <recommendedName>
        <fullName evidence="1">NAD kinase</fullName>
        <ecNumber evidence="1">2.7.1.23</ecNumber>
    </recommendedName>
    <alternativeName>
        <fullName evidence="1">ATP-dependent NAD kinase</fullName>
    </alternativeName>
</protein>
<name>NADK_PHOPR</name>
<evidence type="ECO:0000255" key="1">
    <source>
        <dbReference type="HAMAP-Rule" id="MF_00361"/>
    </source>
</evidence>
<dbReference type="EC" id="2.7.1.23" evidence="1"/>
<dbReference type="EMBL" id="CR378665">
    <property type="protein sequence ID" value="CAG19116.1"/>
    <property type="molecule type" value="Genomic_DNA"/>
</dbReference>
<dbReference type="RefSeq" id="WP_011217462.1">
    <property type="nucleotide sequence ID" value="NC_006370.1"/>
</dbReference>
<dbReference type="SMR" id="Q6LUA9"/>
<dbReference type="STRING" id="298386.PBPRA0695"/>
<dbReference type="KEGG" id="ppr:PBPRA0695"/>
<dbReference type="eggNOG" id="COG0061">
    <property type="taxonomic scope" value="Bacteria"/>
</dbReference>
<dbReference type="HOGENOM" id="CLU_008831_0_1_6"/>
<dbReference type="Proteomes" id="UP000000593">
    <property type="component" value="Chromosome 1"/>
</dbReference>
<dbReference type="GO" id="GO:0005737">
    <property type="term" value="C:cytoplasm"/>
    <property type="evidence" value="ECO:0007669"/>
    <property type="project" value="UniProtKB-SubCell"/>
</dbReference>
<dbReference type="GO" id="GO:0005524">
    <property type="term" value="F:ATP binding"/>
    <property type="evidence" value="ECO:0007669"/>
    <property type="project" value="UniProtKB-KW"/>
</dbReference>
<dbReference type="GO" id="GO:0046872">
    <property type="term" value="F:metal ion binding"/>
    <property type="evidence" value="ECO:0007669"/>
    <property type="project" value="UniProtKB-UniRule"/>
</dbReference>
<dbReference type="GO" id="GO:0051287">
    <property type="term" value="F:NAD binding"/>
    <property type="evidence" value="ECO:0007669"/>
    <property type="project" value="UniProtKB-ARBA"/>
</dbReference>
<dbReference type="GO" id="GO:0003951">
    <property type="term" value="F:NAD+ kinase activity"/>
    <property type="evidence" value="ECO:0007669"/>
    <property type="project" value="UniProtKB-UniRule"/>
</dbReference>
<dbReference type="GO" id="GO:0019674">
    <property type="term" value="P:NAD metabolic process"/>
    <property type="evidence" value="ECO:0007669"/>
    <property type="project" value="InterPro"/>
</dbReference>
<dbReference type="GO" id="GO:0006741">
    <property type="term" value="P:NADP biosynthetic process"/>
    <property type="evidence" value="ECO:0007669"/>
    <property type="project" value="UniProtKB-UniRule"/>
</dbReference>
<dbReference type="FunFam" id="2.60.200.30:FF:000001">
    <property type="entry name" value="NAD kinase"/>
    <property type="match status" value="1"/>
</dbReference>
<dbReference type="Gene3D" id="3.40.50.10330">
    <property type="entry name" value="Probable inorganic polyphosphate/atp-NAD kinase, domain 1"/>
    <property type="match status" value="1"/>
</dbReference>
<dbReference type="Gene3D" id="2.60.200.30">
    <property type="entry name" value="Probable inorganic polyphosphate/atp-NAD kinase, domain 2"/>
    <property type="match status" value="1"/>
</dbReference>
<dbReference type="HAMAP" id="MF_00361">
    <property type="entry name" value="NAD_kinase"/>
    <property type="match status" value="1"/>
</dbReference>
<dbReference type="InterPro" id="IPR017438">
    <property type="entry name" value="ATP-NAD_kinase_N"/>
</dbReference>
<dbReference type="InterPro" id="IPR017437">
    <property type="entry name" value="ATP-NAD_kinase_PpnK-typ_C"/>
</dbReference>
<dbReference type="InterPro" id="IPR016064">
    <property type="entry name" value="NAD/diacylglycerol_kinase_sf"/>
</dbReference>
<dbReference type="InterPro" id="IPR002504">
    <property type="entry name" value="NADK"/>
</dbReference>
<dbReference type="NCBIfam" id="NF002306">
    <property type="entry name" value="PRK01231.1"/>
    <property type="match status" value="1"/>
</dbReference>
<dbReference type="NCBIfam" id="NF002893">
    <property type="entry name" value="PRK03378.1"/>
    <property type="match status" value="1"/>
</dbReference>
<dbReference type="PANTHER" id="PTHR20275">
    <property type="entry name" value="NAD KINASE"/>
    <property type="match status" value="1"/>
</dbReference>
<dbReference type="PANTHER" id="PTHR20275:SF0">
    <property type="entry name" value="NAD KINASE"/>
    <property type="match status" value="1"/>
</dbReference>
<dbReference type="Pfam" id="PF01513">
    <property type="entry name" value="NAD_kinase"/>
    <property type="match status" value="1"/>
</dbReference>
<dbReference type="Pfam" id="PF20143">
    <property type="entry name" value="NAD_kinase_C"/>
    <property type="match status" value="1"/>
</dbReference>
<dbReference type="SUPFAM" id="SSF111331">
    <property type="entry name" value="NAD kinase/diacylglycerol kinase-like"/>
    <property type="match status" value="1"/>
</dbReference>
<reference key="1">
    <citation type="journal article" date="2005" name="Science">
        <title>Life at depth: Photobacterium profundum genome sequence and expression analysis.</title>
        <authorList>
            <person name="Vezzi A."/>
            <person name="Campanaro S."/>
            <person name="D'Angelo M."/>
            <person name="Simonato F."/>
            <person name="Vitulo N."/>
            <person name="Lauro F.M."/>
            <person name="Cestaro A."/>
            <person name="Malacrida G."/>
            <person name="Simionati B."/>
            <person name="Cannata N."/>
            <person name="Romualdi C."/>
            <person name="Bartlett D.H."/>
            <person name="Valle G."/>
        </authorList>
    </citation>
    <scope>NUCLEOTIDE SEQUENCE [LARGE SCALE GENOMIC DNA]</scope>
    <source>
        <strain>ATCC BAA-1253 / SS9</strain>
    </source>
</reference>
<sequence length="293" mass="32204">MKRIFQTIALIGKPRNPDALQTHKTLFDWLTGKGYDVLVDHRLANDLDVPQDCLCDLLTIGDKANLAIVVGGDGNMLGAARVLSRFDIAVIGVNRGNLGFLTDLDPESFKEELTRVLEGEFVTERRFLLEAEVHRHGQIKSRNAALNEAVLHPDKIAHMIEFEVYIDDNFAFSQRSDGLIIATPTGSTAYSLSGGGPILSPSLNAITLVPMFPHTLSSRPLVVDGDRCIKLLVSPNNGSTLEVSCDGQVSLPVSPGDEVHIYQSPEQLQLIHPKNYNYYGVLRAKLGWSSKLF</sequence>
<accession>Q6LUA9</accession>
<proteinExistence type="inferred from homology"/>
<keyword id="KW-0067">ATP-binding</keyword>
<keyword id="KW-0963">Cytoplasm</keyword>
<keyword id="KW-0418">Kinase</keyword>
<keyword id="KW-0520">NAD</keyword>
<keyword id="KW-0521">NADP</keyword>
<keyword id="KW-0547">Nucleotide-binding</keyword>
<keyword id="KW-1185">Reference proteome</keyword>
<keyword id="KW-0808">Transferase</keyword>
<organism>
    <name type="scientific">Photobacterium profundum (strain SS9)</name>
    <dbReference type="NCBI Taxonomy" id="298386"/>
    <lineage>
        <taxon>Bacteria</taxon>
        <taxon>Pseudomonadati</taxon>
        <taxon>Pseudomonadota</taxon>
        <taxon>Gammaproteobacteria</taxon>
        <taxon>Vibrionales</taxon>
        <taxon>Vibrionaceae</taxon>
        <taxon>Photobacterium</taxon>
    </lineage>
</organism>